<protein>
    <recommendedName>
        <fullName evidence="1">Ribonuclease D</fullName>
        <shortName evidence="1">RNase D</shortName>
        <ecNumber evidence="1">3.1.13.5</ecNumber>
    </recommendedName>
</protein>
<keyword id="KW-0963">Cytoplasm</keyword>
<keyword id="KW-0269">Exonuclease</keyword>
<keyword id="KW-0378">Hydrolase</keyword>
<keyword id="KW-0540">Nuclease</keyword>
<keyword id="KW-0819">tRNA processing</keyword>
<gene>
    <name evidence="1" type="primary">rnd</name>
    <name type="ordered locus">Dd703_2009</name>
</gene>
<proteinExistence type="inferred from homology"/>
<accession>C6C608</accession>
<reference key="1">
    <citation type="submission" date="2009-06" db="EMBL/GenBank/DDBJ databases">
        <title>Complete sequence of Dickeya dadantii Ech703.</title>
        <authorList>
            <consortium name="US DOE Joint Genome Institute"/>
            <person name="Lucas S."/>
            <person name="Copeland A."/>
            <person name="Lapidus A."/>
            <person name="Glavina del Rio T."/>
            <person name="Dalin E."/>
            <person name="Tice H."/>
            <person name="Bruce D."/>
            <person name="Goodwin L."/>
            <person name="Pitluck S."/>
            <person name="Chertkov O."/>
            <person name="Brettin T."/>
            <person name="Detter J.C."/>
            <person name="Han C."/>
            <person name="Larimer F."/>
            <person name="Land M."/>
            <person name="Hauser L."/>
            <person name="Kyrpides N."/>
            <person name="Mikhailova N."/>
            <person name="Balakrishnan V."/>
            <person name="Glasner J."/>
            <person name="Perna N.T."/>
        </authorList>
    </citation>
    <scope>NUCLEOTIDE SEQUENCE [LARGE SCALE GENOMIC DNA]</scope>
    <source>
        <strain>Ech703</strain>
    </source>
</reference>
<sequence length="374" mass="42472">MNYQLITTDDGLSEVCSQARRMPQVALDTEFVRTRTYYPQLGLIQLFDGERLSLIDPLSITVWQPFCDLLLDPAVTKYLHAGSEDLEVFLNAFGLLPTPFVDTQILVAFLGKPLSYGFAALVADYMQVTLDKSESRTDWLARPLSEKQCQYAAADVYYLLPMAIRLVEETTSAGWWEAALDECRQLCQRKQDVLAPEQAYREIGNAWQLKGRHLACLQKLADWRLRKARERDSAVNFIVREEHLGQVARYLPGSLGELGALGLSGPEIRYHGKTLLELVAETQTMDAAEYPEPVINLIDYPGYKKAFREIKDLVQQQAERSGLSAELLASRRQINRLLSWHWKLAPQTHVPELLSGWRGRLFGEPLKGILANYI</sequence>
<name>RND_MUSP7</name>
<feature type="chain" id="PRO_0000411062" description="Ribonuclease D">
    <location>
        <begin position="1"/>
        <end position="374"/>
    </location>
</feature>
<feature type="domain" description="3'-5' exonuclease" evidence="1">
    <location>
        <begin position="3"/>
        <end position="171"/>
    </location>
</feature>
<feature type="domain" description="HRDC" evidence="1">
    <location>
        <begin position="210"/>
        <end position="289"/>
    </location>
</feature>
<evidence type="ECO:0000255" key="1">
    <source>
        <dbReference type="HAMAP-Rule" id="MF_01899"/>
    </source>
</evidence>
<evidence type="ECO:0000305" key="2"/>
<organism>
    <name type="scientific">Musicola paradisiaca (strain Ech703)</name>
    <name type="common">Dickeya paradisiaca</name>
    <name type="synonym">Dickeya dadantii</name>
    <dbReference type="NCBI Taxonomy" id="579405"/>
    <lineage>
        <taxon>Bacteria</taxon>
        <taxon>Pseudomonadati</taxon>
        <taxon>Pseudomonadota</taxon>
        <taxon>Gammaproteobacteria</taxon>
        <taxon>Enterobacterales</taxon>
        <taxon>Pectobacteriaceae</taxon>
        <taxon>Musicola</taxon>
    </lineage>
</organism>
<comment type="function">
    <text evidence="1">Exonuclease involved in the 3' processing of various precursor tRNAs. Initiates hydrolysis at the 3'-terminus of an RNA molecule and releases 5'-mononucleotides.</text>
</comment>
<comment type="catalytic activity">
    <reaction evidence="1">
        <text>Exonucleolytic cleavage that removes extra residues from the 3'-terminus of tRNA to produce 5'-mononucleotides.</text>
        <dbReference type="EC" id="3.1.13.5"/>
    </reaction>
</comment>
<comment type="cofactor">
    <cofactor evidence="1">
        <name>a divalent metal cation</name>
        <dbReference type="ChEBI" id="CHEBI:60240"/>
    </cofactor>
</comment>
<comment type="subcellular location">
    <subcellularLocation>
        <location evidence="1">Cytoplasm</location>
    </subcellularLocation>
</comment>
<comment type="similarity">
    <text evidence="1">Belongs to the RNase D family.</text>
</comment>
<comment type="sequence caution" evidence="2">
    <conflict type="erroneous initiation">
        <sequence resource="EMBL-CDS" id="ACS85799"/>
    </conflict>
    <text>Extended N-terminus.</text>
</comment>
<dbReference type="EC" id="3.1.13.5" evidence="1"/>
<dbReference type="EMBL" id="CP001654">
    <property type="protein sequence ID" value="ACS85799.1"/>
    <property type="status" value="ALT_INIT"/>
    <property type="molecule type" value="Genomic_DNA"/>
</dbReference>
<dbReference type="RefSeq" id="WP_023638302.1">
    <property type="nucleotide sequence ID" value="NC_012880.1"/>
</dbReference>
<dbReference type="SMR" id="C6C608"/>
<dbReference type="STRING" id="579405.Dd703_2009"/>
<dbReference type="KEGG" id="dda:Dd703_2009"/>
<dbReference type="eggNOG" id="COG0349">
    <property type="taxonomic scope" value="Bacteria"/>
</dbReference>
<dbReference type="HOGENOM" id="CLU_042387_0_1_6"/>
<dbReference type="Proteomes" id="UP000002734">
    <property type="component" value="Chromosome"/>
</dbReference>
<dbReference type="GO" id="GO:0005737">
    <property type="term" value="C:cytoplasm"/>
    <property type="evidence" value="ECO:0007669"/>
    <property type="project" value="UniProtKB-SubCell"/>
</dbReference>
<dbReference type="GO" id="GO:0008408">
    <property type="term" value="F:3'-5' exonuclease activity"/>
    <property type="evidence" value="ECO:0007669"/>
    <property type="project" value="InterPro"/>
</dbReference>
<dbReference type="GO" id="GO:0003676">
    <property type="term" value="F:nucleic acid binding"/>
    <property type="evidence" value="ECO:0007669"/>
    <property type="project" value="InterPro"/>
</dbReference>
<dbReference type="GO" id="GO:0000166">
    <property type="term" value="F:nucleotide binding"/>
    <property type="evidence" value="ECO:0007669"/>
    <property type="project" value="InterPro"/>
</dbReference>
<dbReference type="GO" id="GO:0033890">
    <property type="term" value="F:ribonuclease D activity"/>
    <property type="evidence" value="ECO:0007669"/>
    <property type="project" value="UniProtKB-UniRule"/>
</dbReference>
<dbReference type="GO" id="GO:0042780">
    <property type="term" value="P:tRNA 3'-end processing"/>
    <property type="evidence" value="ECO:0007669"/>
    <property type="project" value="UniProtKB-UniRule"/>
</dbReference>
<dbReference type="CDD" id="cd06142">
    <property type="entry name" value="RNaseD_exo"/>
    <property type="match status" value="1"/>
</dbReference>
<dbReference type="FunFam" id="3.30.420.10:FF:000060">
    <property type="entry name" value="Ribonuclease D"/>
    <property type="match status" value="1"/>
</dbReference>
<dbReference type="Gene3D" id="1.10.150.80">
    <property type="entry name" value="HRDC domain"/>
    <property type="match status" value="2"/>
</dbReference>
<dbReference type="Gene3D" id="3.30.420.10">
    <property type="entry name" value="Ribonuclease H-like superfamily/Ribonuclease H"/>
    <property type="match status" value="1"/>
</dbReference>
<dbReference type="HAMAP" id="MF_01899">
    <property type="entry name" value="RNase_D"/>
    <property type="match status" value="1"/>
</dbReference>
<dbReference type="InterPro" id="IPR002562">
    <property type="entry name" value="3'-5'_exonuclease_dom"/>
</dbReference>
<dbReference type="InterPro" id="IPR010997">
    <property type="entry name" value="HRDC-like_sf"/>
</dbReference>
<dbReference type="InterPro" id="IPR002121">
    <property type="entry name" value="HRDC_dom"/>
</dbReference>
<dbReference type="InterPro" id="IPR044876">
    <property type="entry name" value="HRDC_dom_sf"/>
</dbReference>
<dbReference type="InterPro" id="IPR006292">
    <property type="entry name" value="RNase_D"/>
</dbReference>
<dbReference type="InterPro" id="IPR051086">
    <property type="entry name" value="RNase_D-like"/>
</dbReference>
<dbReference type="InterPro" id="IPR048579">
    <property type="entry name" value="RNAseD_HRDC_C"/>
</dbReference>
<dbReference type="InterPro" id="IPR012337">
    <property type="entry name" value="RNaseH-like_sf"/>
</dbReference>
<dbReference type="InterPro" id="IPR036397">
    <property type="entry name" value="RNaseH_sf"/>
</dbReference>
<dbReference type="NCBIfam" id="NF008089">
    <property type="entry name" value="PRK10829.1"/>
    <property type="match status" value="1"/>
</dbReference>
<dbReference type="NCBIfam" id="TIGR01388">
    <property type="entry name" value="rnd"/>
    <property type="match status" value="1"/>
</dbReference>
<dbReference type="PANTHER" id="PTHR47649">
    <property type="entry name" value="RIBONUCLEASE D"/>
    <property type="match status" value="1"/>
</dbReference>
<dbReference type="PANTHER" id="PTHR47649:SF1">
    <property type="entry name" value="RIBONUCLEASE D"/>
    <property type="match status" value="1"/>
</dbReference>
<dbReference type="Pfam" id="PF01612">
    <property type="entry name" value="DNA_pol_A_exo1"/>
    <property type="match status" value="1"/>
</dbReference>
<dbReference type="Pfam" id="PF00570">
    <property type="entry name" value="HRDC"/>
    <property type="match status" value="1"/>
</dbReference>
<dbReference type="Pfam" id="PF21293">
    <property type="entry name" value="RNAseD_HRDC_C"/>
    <property type="match status" value="1"/>
</dbReference>
<dbReference type="SMART" id="SM00474">
    <property type="entry name" value="35EXOc"/>
    <property type="match status" value="1"/>
</dbReference>
<dbReference type="SMART" id="SM00341">
    <property type="entry name" value="HRDC"/>
    <property type="match status" value="1"/>
</dbReference>
<dbReference type="SUPFAM" id="SSF47819">
    <property type="entry name" value="HRDC-like"/>
    <property type="match status" value="2"/>
</dbReference>
<dbReference type="SUPFAM" id="SSF53098">
    <property type="entry name" value="Ribonuclease H-like"/>
    <property type="match status" value="1"/>
</dbReference>
<dbReference type="PROSITE" id="PS50967">
    <property type="entry name" value="HRDC"/>
    <property type="match status" value="1"/>
</dbReference>